<reference key="1">
    <citation type="journal article" date="1997" name="Nature">
        <title>The complete genome sequence of the Gram-positive bacterium Bacillus subtilis.</title>
        <authorList>
            <person name="Kunst F."/>
            <person name="Ogasawara N."/>
            <person name="Moszer I."/>
            <person name="Albertini A.M."/>
            <person name="Alloni G."/>
            <person name="Azevedo V."/>
            <person name="Bertero M.G."/>
            <person name="Bessieres P."/>
            <person name="Bolotin A."/>
            <person name="Borchert S."/>
            <person name="Borriss R."/>
            <person name="Boursier L."/>
            <person name="Brans A."/>
            <person name="Braun M."/>
            <person name="Brignell S.C."/>
            <person name="Bron S."/>
            <person name="Brouillet S."/>
            <person name="Bruschi C.V."/>
            <person name="Caldwell B."/>
            <person name="Capuano V."/>
            <person name="Carter N.M."/>
            <person name="Choi S.-K."/>
            <person name="Codani J.-J."/>
            <person name="Connerton I.F."/>
            <person name="Cummings N.J."/>
            <person name="Daniel R.A."/>
            <person name="Denizot F."/>
            <person name="Devine K.M."/>
            <person name="Duesterhoeft A."/>
            <person name="Ehrlich S.D."/>
            <person name="Emmerson P.T."/>
            <person name="Entian K.-D."/>
            <person name="Errington J."/>
            <person name="Fabret C."/>
            <person name="Ferrari E."/>
            <person name="Foulger D."/>
            <person name="Fritz C."/>
            <person name="Fujita M."/>
            <person name="Fujita Y."/>
            <person name="Fuma S."/>
            <person name="Galizzi A."/>
            <person name="Galleron N."/>
            <person name="Ghim S.-Y."/>
            <person name="Glaser P."/>
            <person name="Goffeau A."/>
            <person name="Golightly E.J."/>
            <person name="Grandi G."/>
            <person name="Guiseppi G."/>
            <person name="Guy B.J."/>
            <person name="Haga K."/>
            <person name="Haiech J."/>
            <person name="Harwood C.R."/>
            <person name="Henaut A."/>
            <person name="Hilbert H."/>
            <person name="Holsappel S."/>
            <person name="Hosono S."/>
            <person name="Hullo M.-F."/>
            <person name="Itaya M."/>
            <person name="Jones L.-M."/>
            <person name="Joris B."/>
            <person name="Karamata D."/>
            <person name="Kasahara Y."/>
            <person name="Klaerr-Blanchard M."/>
            <person name="Klein C."/>
            <person name="Kobayashi Y."/>
            <person name="Koetter P."/>
            <person name="Koningstein G."/>
            <person name="Krogh S."/>
            <person name="Kumano M."/>
            <person name="Kurita K."/>
            <person name="Lapidus A."/>
            <person name="Lardinois S."/>
            <person name="Lauber J."/>
            <person name="Lazarevic V."/>
            <person name="Lee S.-M."/>
            <person name="Levine A."/>
            <person name="Liu H."/>
            <person name="Masuda S."/>
            <person name="Mauel C."/>
            <person name="Medigue C."/>
            <person name="Medina N."/>
            <person name="Mellado R.P."/>
            <person name="Mizuno M."/>
            <person name="Moestl D."/>
            <person name="Nakai S."/>
            <person name="Noback M."/>
            <person name="Noone D."/>
            <person name="O'Reilly M."/>
            <person name="Ogawa K."/>
            <person name="Ogiwara A."/>
            <person name="Oudega B."/>
            <person name="Park S.-H."/>
            <person name="Parro V."/>
            <person name="Pohl T.M."/>
            <person name="Portetelle D."/>
            <person name="Porwollik S."/>
            <person name="Prescott A.M."/>
            <person name="Presecan E."/>
            <person name="Pujic P."/>
            <person name="Purnelle B."/>
            <person name="Rapoport G."/>
            <person name="Rey M."/>
            <person name="Reynolds S."/>
            <person name="Rieger M."/>
            <person name="Rivolta C."/>
            <person name="Rocha E."/>
            <person name="Roche B."/>
            <person name="Rose M."/>
            <person name="Sadaie Y."/>
            <person name="Sato T."/>
            <person name="Scanlan E."/>
            <person name="Schleich S."/>
            <person name="Schroeter R."/>
            <person name="Scoffone F."/>
            <person name="Sekiguchi J."/>
            <person name="Sekowska A."/>
            <person name="Seror S.J."/>
            <person name="Serror P."/>
            <person name="Shin B.-S."/>
            <person name="Soldo B."/>
            <person name="Sorokin A."/>
            <person name="Tacconi E."/>
            <person name="Takagi T."/>
            <person name="Takahashi H."/>
            <person name="Takemaru K."/>
            <person name="Takeuchi M."/>
            <person name="Tamakoshi A."/>
            <person name="Tanaka T."/>
            <person name="Terpstra P."/>
            <person name="Tognoni A."/>
            <person name="Tosato V."/>
            <person name="Uchiyama S."/>
            <person name="Vandenbol M."/>
            <person name="Vannier F."/>
            <person name="Vassarotti A."/>
            <person name="Viari A."/>
            <person name="Wambutt R."/>
            <person name="Wedler E."/>
            <person name="Wedler H."/>
            <person name="Weitzenegger T."/>
            <person name="Winters P."/>
            <person name="Wipat A."/>
            <person name="Yamamoto H."/>
            <person name="Yamane K."/>
            <person name="Yasumoto K."/>
            <person name="Yata K."/>
            <person name="Yoshida K."/>
            <person name="Yoshikawa H.-F."/>
            <person name="Zumstein E."/>
            <person name="Yoshikawa H."/>
            <person name="Danchin A."/>
        </authorList>
    </citation>
    <scope>NUCLEOTIDE SEQUENCE [LARGE SCALE GENOMIC DNA]</scope>
    <source>
        <strain>168</strain>
    </source>
</reference>
<proteinExistence type="predicted"/>
<feature type="chain" id="PRO_0000360760" description="Thioredoxin-like protein YusE">
    <location>
        <begin position="1"/>
        <end position="106"/>
    </location>
</feature>
<feature type="domain" description="Thioredoxin">
    <location>
        <begin position="1"/>
        <end position="101"/>
    </location>
</feature>
<feature type="disulfide bond" description="Redox-active" evidence="1">
    <location>
        <begin position="26"/>
        <end position="29"/>
    </location>
</feature>
<organism>
    <name type="scientific">Bacillus subtilis (strain 168)</name>
    <dbReference type="NCBI Taxonomy" id="224308"/>
    <lineage>
        <taxon>Bacteria</taxon>
        <taxon>Bacillati</taxon>
        <taxon>Bacillota</taxon>
        <taxon>Bacilli</taxon>
        <taxon>Bacillales</taxon>
        <taxon>Bacillaceae</taxon>
        <taxon>Bacillus</taxon>
    </lineage>
</organism>
<gene>
    <name type="primary">yusE</name>
    <name type="ordered locus">BSU32770</name>
</gene>
<sequence length="106" mass="12245">MKELQEHELDHIEDDVYLLYLYTPFCGTCQLASKMLTVVKEMLPDVAFYQNNVNYSPTFAKAYQIESVPCFLLFKGGKMVERGYAFHSVSYLYELIKQKSSSASHL</sequence>
<accession>O32171</accession>
<name>YUSE_BACSU</name>
<evidence type="ECO:0000250" key="1"/>
<dbReference type="EMBL" id="AL009126">
    <property type="protein sequence ID" value="CAB15266.1"/>
    <property type="molecule type" value="Genomic_DNA"/>
</dbReference>
<dbReference type="PIR" id="F70020">
    <property type="entry name" value="F70020"/>
</dbReference>
<dbReference type="RefSeq" id="NP_391156.1">
    <property type="nucleotide sequence ID" value="NC_000964.3"/>
</dbReference>
<dbReference type="RefSeq" id="WP_003228585.1">
    <property type="nucleotide sequence ID" value="NZ_OZ025638.1"/>
</dbReference>
<dbReference type="SMR" id="O32171"/>
<dbReference type="FunCoup" id="O32171">
    <property type="interactions" value="2"/>
</dbReference>
<dbReference type="STRING" id="224308.BSU32770"/>
<dbReference type="PaxDb" id="224308-BSU32770"/>
<dbReference type="EnsemblBacteria" id="CAB15266">
    <property type="protein sequence ID" value="CAB15266"/>
    <property type="gene ID" value="BSU_32770"/>
</dbReference>
<dbReference type="GeneID" id="937184"/>
<dbReference type="KEGG" id="bsu:BSU32770"/>
<dbReference type="PATRIC" id="fig|224308.179.peg.3551"/>
<dbReference type="eggNOG" id="COG0526">
    <property type="taxonomic scope" value="Bacteria"/>
</dbReference>
<dbReference type="InParanoid" id="O32171"/>
<dbReference type="OrthoDB" id="5784238at2"/>
<dbReference type="PhylomeDB" id="O32171"/>
<dbReference type="BioCyc" id="BSUB:BSU32770-MONOMER"/>
<dbReference type="Proteomes" id="UP000001570">
    <property type="component" value="Chromosome"/>
</dbReference>
<dbReference type="GO" id="GO:0005737">
    <property type="term" value="C:cytoplasm"/>
    <property type="evidence" value="ECO:0000318"/>
    <property type="project" value="GO_Central"/>
</dbReference>
<dbReference type="GO" id="GO:0005829">
    <property type="term" value="C:cytosol"/>
    <property type="evidence" value="ECO:0000318"/>
    <property type="project" value="GO_Central"/>
</dbReference>
<dbReference type="GO" id="GO:0015035">
    <property type="term" value="F:protein-disulfide reductase activity"/>
    <property type="evidence" value="ECO:0000318"/>
    <property type="project" value="GO_Central"/>
</dbReference>
<dbReference type="GO" id="GO:0045454">
    <property type="term" value="P:cell redox homeostasis"/>
    <property type="evidence" value="ECO:0000318"/>
    <property type="project" value="GO_Central"/>
</dbReference>
<dbReference type="CDD" id="cd02947">
    <property type="entry name" value="TRX_family"/>
    <property type="match status" value="1"/>
</dbReference>
<dbReference type="Gene3D" id="3.40.30.10">
    <property type="entry name" value="Glutaredoxin"/>
    <property type="match status" value="1"/>
</dbReference>
<dbReference type="InterPro" id="IPR036249">
    <property type="entry name" value="Thioredoxin-like_sf"/>
</dbReference>
<dbReference type="InterPro" id="IPR013766">
    <property type="entry name" value="Thioredoxin_domain"/>
</dbReference>
<dbReference type="PANTHER" id="PTHR45663">
    <property type="entry name" value="GEO12009P1"/>
    <property type="match status" value="1"/>
</dbReference>
<dbReference type="PANTHER" id="PTHR45663:SF41">
    <property type="entry name" value="THIOREDOXIN-LIKE PROTEIN YUSE"/>
    <property type="match status" value="1"/>
</dbReference>
<dbReference type="Pfam" id="PF00085">
    <property type="entry name" value="Thioredoxin"/>
    <property type="match status" value="1"/>
</dbReference>
<dbReference type="SUPFAM" id="SSF52833">
    <property type="entry name" value="Thioredoxin-like"/>
    <property type="match status" value="1"/>
</dbReference>
<protein>
    <recommendedName>
        <fullName>Thioredoxin-like protein YusE</fullName>
    </recommendedName>
</protein>
<keyword id="KW-1015">Disulfide bond</keyword>
<keyword id="KW-0676">Redox-active center</keyword>
<keyword id="KW-1185">Reference proteome</keyword>